<feature type="chain" id="PRO_1000059161" description="A-type ATP synthase subunit D">
    <location>
        <begin position="1"/>
        <end position="212"/>
    </location>
</feature>
<accession>A6UT37</accession>
<dbReference type="EMBL" id="CP000743">
    <property type="protein sequence ID" value="ABR55659.1"/>
    <property type="molecule type" value="Genomic_DNA"/>
</dbReference>
<dbReference type="RefSeq" id="WP_011972791.1">
    <property type="nucleotide sequence ID" value="NC_009635.1"/>
</dbReference>
<dbReference type="SMR" id="A6UT37"/>
<dbReference type="STRING" id="419665.Maeo_0067"/>
<dbReference type="GeneID" id="5326687"/>
<dbReference type="KEGG" id="mae:Maeo_0067"/>
<dbReference type="eggNOG" id="arCOG04101">
    <property type="taxonomic scope" value="Archaea"/>
</dbReference>
<dbReference type="HOGENOM" id="CLU_069688_2_1_2"/>
<dbReference type="OrthoDB" id="117390at2157"/>
<dbReference type="Proteomes" id="UP000001106">
    <property type="component" value="Chromosome"/>
</dbReference>
<dbReference type="GO" id="GO:0005886">
    <property type="term" value="C:plasma membrane"/>
    <property type="evidence" value="ECO:0007669"/>
    <property type="project" value="UniProtKB-SubCell"/>
</dbReference>
<dbReference type="GO" id="GO:0005524">
    <property type="term" value="F:ATP binding"/>
    <property type="evidence" value="ECO:0007669"/>
    <property type="project" value="UniProtKB-UniRule"/>
</dbReference>
<dbReference type="GO" id="GO:0046933">
    <property type="term" value="F:proton-transporting ATP synthase activity, rotational mechanism"/>
    <property type="evidence" value="ECO:0007669"/>
    <property type="project" value="UniProtKB-UniRule"/>
</dbReference>
<dbReference type="GO" id="GO:0046961">
    <property type="term" value="F:proton-transporting ATPase activity, rotational mechanism"/>
    <property type="evidence" value="ECO:0007669"/>
    <property type="project" value="InterPro"/>
</dbReference>
<dbReference type="GO" id="GO:0042777">
    <property type="term" value="P:proton motive force-driven plasma membrane ATP synthesis"/>
    <property type="evidence" value="ECO:0007669"/>
    <property type="project" value="UniProtKB-UniRule"/>
</dbReference>
<dbReference type="FunFam" id="1.10.287.3240:FF:000007">
    <property type="entry name" value="V-type ATP synthase subunit D"/>
    <property type="match status" value="1"/>
</dbReference>
<dbReference type="Gene3D" id="1.10.287.3240">
    <property type="match status" value="1"/>
</dbReference>
<dbReference type="HAMAP" id="MF_00271">
    <property type="entry name" value="ATP_synth_D_arch"/>
    <property type="match status" value="1"/>
</dbReference>
<dbReference type="InterPro" id="IPR002699">
    <property type="entry name" value="V_ATPase_D"/>
</dbReference>
<dbReference type="NCBIfam" id="NF001545">
    <property type="entry name" value="PRK00373.1-4"/>
    <property type="match status" value="1"/>
</dbReference>
<dbReference type="NCBIfam" id="TIGR00309">
    <property type="entry name" value="V_ATPase_subD"/>
    <property type="match status" value="1"/>
</dbReference>
<dbReference type="PANTHER" id="PTHR11671">
    <property type="entry name" value="V-TYPE ATP SYNTHASE SUBUNIT D"/>
    <property type="match status" value="1"/>
</dbReference>
<dbReference type="Pfam" id="PF01813">
    <property type="entry name" value="ATP-synt_D"/>
    <property type="match status" value="1"/>
</dbReference>
<organism>
    <name type="scientific">Methanococcus aeolicus (strain ATCC BAA-1280 / DSM 17508 / OCM 812 / Nankai-3)</name>
    <dbReference type="NCBI Taxonomy" id="419665"/>
    <lineage>
        <taxon>Archaea</taxon>
        <taxon>Methanobacteriati</taxon>
        <taxon>Methanobacteriota</taxon>
        <taxon>Methanomada group</taxon>
        <taxon>Methanococci</taxon>
        <taxon>Methanococcales</taxon>
        <taxon>Methanococcaceae</taxon>
        <taxon>Methanococcus</taxon>
    </lineage>
</organism>
<proteinExistence type="inferred from homology"/>
<protein>
    <recommendedName>
        <fullName evidence="1">A-type ATP synthase subunit D</fullName>
    </recommendedName>
</protein>
<evidence type="ECO:0000255" key="1">
    <source>
        <dbReference type="HAMAP-Rule" id="MF_00271"/>
    </source>
</evidence>
<name>AATD_META3</name>
<gene>
    <name evidence="1" type="primary">atpD</name>
    <name type="ordered locus">Maeo_0067</name>
</gene>
<sequence length="212" mass="24311">MADINPTRMELLKLKTKIKLAQKGHKLLKQKRDALIMEFFEILDQASGIRDKVNNALEKAYKDLIMAQAVMGTLSVQEISYASKNDNIVLDLDTRNIMGVTVPVLEIENVKRTMADRGYGPYGVSSKLDEAAKEFEEALELIMELAEIETSIKLLAEEIITTKRRVNALEYVVIPRMAEMQKYIGMRLDEMERENFFRLKLIKARIDAREEA</sequence>
<keyword id="KW-0066">ATP synthesis</keyword>
<keyword id="KW-1003">Cell membrane</keyword>
<keyword id="KW-0375">Hydrogen ion transport</keyword>
<keyword id="KW-0406">Ion transport</keyword>
<keyword id="KW-0472">Membrane</keyword>
<keyword id="KW-0813">Transport</keyword>
<comment type="function">
    <text evidence="1">Component of the A-type ATP synthase that produces ATP from ADP in the presence of a proton gradient across the membrane.</text>
</comment>
<comment type="subunit">
    <text evidence="1">Has multiple subunits with at least A(3), B(3), C, D, E, F, H, I and proteolipid K(x).</text>
</comment>
<comment type="subcellular location">
    <subcellularLocation>
        <location evidence="1">Cell membrane</location>
        <topology evidence="1">Peripheral membrane protein</topology>
    </subcellularLocation>
</comment>
<comment type="similarity">
    <text evidence="1">Belongs to the V-ATPase D subunit family.</text>
</comment>
<reference key="1">
    <citation type="submission" date="2007-06" db="EMBL/GenBank/DDBJ databases">
        <title>Complete sequence of Methanococcus aeolicus Nankai-3.</title>
        <authorList>
            <consortium name="US DOE Joint Genome Institute"/>
            <person name="Copeland A."/>
            <person name="Lucas S."/>
            <person name="Lapidus A."/>
            <person name="Barry K."/>
            <person name="Glavina del Rio T."/>
            <person name="Dalin E."/>
            <person name="Tice H."/>
            <person name="Pitluck S."/>
            <person name="Chain P."/>
            <person name="Malfatti S."/>
            <person name="Shin M."/>
            <person name="Vergez L."/>
            <person name="Schmutz J."/>
            <person name="Larimer F."/>
            <person name="Land M."/>
            <person name="Hauser L."/>
            <person name="Kyrpides N."/>
            <person name="Lykidis A."/>
            <person name="Sieprawska-Lupa M."/>
            <person name="Whitman W.B."/>
            <person name="Richardson P."/>
        </authorList>
    </citation>
    <scope>NUCLEOTIDE SEQUENCE [LARGE SCALE GENOMIC DNA]</scope>
    <source>
        <strain>ATCC BAA-1280 / DSM 17508 / OCM 812 / Nankai-3</strain>
    </source>
</reference>